<comment type="subcellular location">
    <subcellularLocation>
        <location evidence="4">Secreted</location>
    </subcellularLocation>
</comment>
<comment type="alternative products">
    <event type="alternative splicing"/>
    <isoform>
        <id>Q5DFZ7-1</id>
        <name>1</name>
        <sequence type="displayed"/>
    </isoform>
    <isoform>
        <id>Q5DFZ7-2</id>
        <name>2</name>
        <sequence type="described" ref="VSP_029562"/>
    </isoform>
</comment>
<comment type="domain">
    <text evidence="4">The presence of a 'disulfide through disulfide knot' structurally defines this protein as a knottin.</text>
</comment>
<dbReference type="EMBL" id="AY813527">
    <property type="protein sequence ID" value="AAW25259.1"/>
    <property type="molecule type" value="mRNA"/>
</dbReference>
<dbReference type="EMBL" id="AY570752">
    <property type="protein sequence ID" value="AAS68257.1"/>
    <property type="molecule type" value="mRNA"/>
</dbReference>
<dbReference type="EMBL" id="DQ076155">
    <property type="protein sequence ID" value="AAY97893.1"/>
    <property type="molecule type" value="mRNA"/>
</dbReference>
<dbReference type="EMBL" id="DQ335568">
    <property type="protein sequence ID" value="ABC61058.1"/>
    <property type="molecule type" value="Genomic_DNA"/>
</dbReference>
<dbReference type="GO" id="GO:0005576">
    <property type="term" value="C:extracellular region"/>
    <property type="evidence" value="ECO:0007669"/>
    <property type="project" value="UniProtKB-SubCell"/>
</dbReference>
<dbReference type="Pfam" id="PF05980">
    <property type="entry name" value="Toxin_7"/>
    <property type="match status" value="2"/>
</dbReference>
<organism>
    <name type="scientific">Schistosoma japonicum</name>
    <name type="common">Blood fluke</name>
    <dbReference type="NCBI Taxonomy" id="6182"/>
    <lineage>
        <taxon>Eukaryota</taxon>
        <taxon>Metazoa</taxon>
        <taxon>Spiralia</taxon>
        <taxon>Lophotrochozoa</taxon>
        <taxon>Platyhelminthes</taxon>
        <taxon>Trematoda</taxon>
        <taxon>Digenea</taxon>
        <taxon>Strigeidida</taxon>
        <taxon>Schistosomatoidea</taxon>
        <taxon>Schistosomatidae</taxon>
        <taxon>Schistosoma</taxon>
    </lineage>
</organism>
<evidence type="ECO:0000255" key="1"/>
<evidence type="ECO:0000303" key="2">
    <source ref="2"/>
</evidence>
<evidence type="ECO:0000303" key="3">
    <source ref="3"/>
</evidence>
<evidence type="ECO:0000305" key="4"/>
<protein>
    <recommendedName>
        <fullName>Egg protein CP422</fullName>
    </recommendedName>
    <alternativeName>
        <fullName>Protease inhibitor bi-domain</fullName>
    </alternativeName>
</protein>
<keyword id="KW-0025">Alternative splicing</keyword>
<keyword id="KW-1015">Disulfide bond</keyword>
<keyword id="KW-0960">Knottin</keyword>
<keyword id="KW-0964">Secreted</keyword>
<keyword id="KW-0732">Signal</keyword>
<feature type="signal peptide" evidence="1">
    <location>
        <begin position="1"/>
        <end position="21"/>
    </location>
</feature>
<feature type="chain" id="PRO_0000311405" description="Egg protein CP422">
    <location>
        <begin position="22"/>
        <end position="133"/>
    </location>
</feature>
<feature type="disulfide bond" evidence="4">
    <location>
        <begin position="107"/>
        <end position="121"/>
    </location>
</feature>
<feature type="disulfide bond" evidence="4">
    <location>
        <begin position="114"/>
        <end position="125"/>
    </location>
</feature>
<feature type="disulfide bond" evidence="4">
    <location>
        <begin position="120"/>
        <end position="130"/>
    </location>
</feature>
<feature type="splice variant" id="VSP_029562" description="In isoform 2." evidence="2 3">
    <location>
        <begin position="21"/>
        <end position="61"/>
    </location>
</feature>
<feature type="sequence conflict" description="In Ref. 4; ABC61058." evidence="4" ref="4">
    <original>H</original>
    <variation>R</variation>
    <location>
        <position position="2"/>
    </location>
</feature>
<feature type="sequence conflict" description="In Ref. 3; AAY97893." evidence="4" ref="3">
    <original>E</original>
    <variation>D</variation>
    <location>
        <position position="63"/>
    </location>
</feature>
<feature type="sequence conflict" description="In Ref. 4; ABC61058." evidence="4" ref="4">
    <original>G</original>
    <variation>S</variation>
    <location>
        <position position="106"/>
    </location>
</feature>
<proteinExistence type="evidence at transcript level"/>
<sequence length="133" mass="14858">MHECMIVFFIFAVVSIYYADAESCLYLGQHCNALATKKCCPPFTCKFVNQREGICVREDPGAESCLYLGQHCNALATKKCCPPFTCKFVNQREGICVREDPGVGGGCLPDKQQCRRNKDCCSKSCYRGNCRSK</sequence>
<gene>
    <name type="primary">CP422</name>
</gene>
<reference key="1">
    <citation type="journal article" date="2006" name="PLoS Pathog.">
        <title>New perspectives on host-parasite interplay by comparative transcriptomic and proteomic analyses of Schistosoma japonicum.</title>
        <authorList>
            <person name="Liu F."/>
            <person name="Lu J."/>
            <person name="Hu W."/>
            <person name="Wang S.-Y."/>
            <person name="Cui S.-J."/>
            <person name="Chi M."/>
            <person name="Yan Q."/>
            <person name="Wang X.-R."/>
            <person name="Song H.-D."/>
            <person name="Xu X.-N."/>
            <person name="Wang J.-J."/>
            <person name="Zhang X.-L."/>
            <person name="Zhang X."/>
            <person name="Wang Z.-Q."/>
            <person name="Xue C.-L."/>
            <person name="Brindley P.J."/>
            <person name="McManus D.P."/>
            <person name="Yang P.-Y."/>
            <person name="Feng Z."/>
            <person name="Chen Z."/>
            <person name="Han Z.-G."/>
        </authorList>
    </citation>
    <scope>NUCLEOTIDE SEQUENCE [LARGE SCALE MRNA] (ISOFORM 1)</scope>
</reference>
<reference key="2">
    <citation type="submission" date="2004-03" db="EMBL/GenBank/DDBJ databases">
        <title>Using retrovirus SST system to isolate the cDNA harboring functional signal sequence from egg of Schistosoma japonicum (Chinese Mainland Strain).</title>
        <authorList>
            <person name="Yu C."/>
            <person name="Zhang F."/>
            <person name="Mihoko K."/>
            <person name="Masahiro I."/>
            <person name="Zhu Y."/>
            <person name="Hirayama K."/>
        </authorList>
    </citation>
    <scope>NUCLEOTIDE SEQUENCE [MRNA] (ISOFORM 2)</scope>
</reference>
<reference key="3">
    <citation type="submission" date="2005-05" db="EMBL/GenBank/DDBJ databases">
        <title>Cloning and function prediction of Schistosoma japonicum differentially expressed protein.</title>
        <authorList>
            <person name="Yuan C.-X."/>
            <person name="Lu K."/>
            <person name="Lin J.-J."/>
        </authorList>
    </citation>
    <scope>NUCLEOTIDE SEQUENCE [MRNA] (ISOFORM 2)</scope>
    <source>
        <strain>Chinese</strain>
    </source>
</reference>
<reference key="4">
    <citation type="submission" date="2005-12" db="EMBL/GenBank/DDBJ databases">
        <title>Genomic DNA encoding an inhibitor cystine knot (ICK) peptide, a putative protease inhibitor bi-domain.</title>
        <authorList>
            <person name="Zhu S."/>
            <person name="Gao B."/>
        </authorList>
    </citation>
    <scope>NUCLEOTIDE SEQUENCE [GENOMIC DNA] (ISOFORM 2)</scope>
</reference>
<name>CP422_SCHJA</name>
<accession>Q5DFZ7</accession>
<accession>Q1A4H0</accession>
<accession>Q4JL30</accession>
<accession>Q6PYV0</accession>